<name>SYGA_HELP2</name>
<comment type="catalytic activity">
    <reaction evidence="1">
        <text>tRNA(Gly) + glycine + ATP = glycyl-tRNA(Gly) + AMP + diphosphate</text>
        <dbReference type="Rhea" id="RHEA:16013"/>
        <dbReference type="Rhea" id="RHEA-COMP:9664"/>
        <dbReference type="Rhea" id="RHEA-COMP:9683"/>
        <dbReference type="ChEBI" id="CHEBI:30616"/>
        <dbReference type="ChEBI" id="CHEBI:33019"/>
        <dbReference type="ChEBI" id="CHEBI:57305"/>
        <dbReference type="ChEBI" id="CHEBI:78442"/>
        <dbReference type="ChEBI" id="CHEBI:78522"/>
        <dbReference type="ChEBI" id="CHEBI:456215"/>
        <dbReference type="EC" id="6.1.1.14"/>
    </reaction>
</comment>
<comment type="subunit">
    <text evidence="1">Tetramer of two alpha and two beta subunits.</text>
</comment>
<comment type="subcellular location">
    <subcellularLocation>
        <location evidence="1">Cytoplasm</location>
    </subcellularLocation>
</comment>
<comment type="similarity">
    <text evidence="1">Belongs to the class-II aminoacyl-tRNA synthetase family.</text>
</comment>
<protein>
    <recommendedName>
        <fullName evidence="1">Glycine--tRNA ligase alpha subunit</fullName>
        <ecNumber evidence="1">6.1.1.14</ecNumber>
    </recommendedName>
    <alternativeName>
        <fullName evidence="1">Glycyl-tRNA synthetase alpha subunit</fullName>
        <shortName evidence="1">GlyRS</shortName>
    </alternativeName>
</protein>
<sequence length="298" mass="34499">MQDFSSLLLKLQEYWKNQGCLVIQPYDIPAGAGTFHPATLLRSLDKKPWNVAYVAPSRRPTDGRYGENPNRLGSYYQFQVVIKPSPSNIQELYLKSLEVLGINLNEHDIRFVEDNWESPTLGAWGLGWEVWLDGMEVTQFTYFQQVGGIACSPIPVEITYGLERLAMYVQKVENILEIEWAKKDNDSVRYMQVHLESEYEFSKYHFEAASVKRLLEMFKNAQAEALHCLENKLPLPAYDFVMLCSHFFNILDARKAISVAERQNYILQIRDLAKGCALLYKEQEEEREERLKNALTKA</sequence>
<keyword id="KW-0030">Aminoacyl-tRNA synthetase</keyword>
<keyword id="KW-0067">ATP-binding</keyword>
<keyword id="KW-0963">Cytoplasm</keyword>
<keyword id="KW-0436">Ligase</keyword>
<keyword id="KW-0547">Nucleotide-binding</keyword>
<keyword id="KW-0648">Protein biosynthesis</keyword>
<gene>
    <name evidence="1" type="primary">glyQ</name>
    <name type="ordered locus">HPP12_0956</name>
</gene>
<dbReference type="EC" id="6.1.1.14" evidence="1"/>
<dbReference type="EMBL" id="CP001217">
    <property type="protein sequence ID" value="ACJ08108.1"/>
    <property type="molecule type" value="Genomic_DNA"/>
</dbReference>
<dbReference type="SMR" id="B6JMI0"/>
<dbReference type="KEGG" id="hpp:HPP12_0956"/>
<dbReference type="HOGENOM" id="CLU_057066_1_0_7"/>
<dbReference type="Proteomes" id="UP000008198">
    <property type="component" value="Chromosome"/>
</dbReference>
<dbReference type="GO" id="GO:0005829">
    <property type="term" value="C:cytosol"/>
    <property type="evidence" value="ECO:0007669"/>
    <property type="project" value="TreeGrafter"/>
</dbReference>
<dbReference type="GO" id="GO:0005524">
    <property type="term" value="F:ATP binding"/>
    <property type="evidence" value="ECO:0007669"/>
    <property type="project" value="UniProtKB-UniRule"/>
</dbReference>
<dbReference type="GO" id="GO:0004820">
    <property type="term" value="F:glycine-tRNA ligase activity"/>
    <property type="evidence" value="ECO:0007669"/>
    <property type="project" value="UniProtKB-UniRule"/>
</dbReference>
<dbReference type="GO" id="GO:0006426">
    <property type="term" value="P:glycyl-tRNA aminoacylation"/>
    <property type="evidence" value="ECO:0007669"/>
    <property type="project" value="UniProtKB-UniRule"/>
</dbReference>
<dbReference type="CDD" id="cd00733">
    <property type="entry name" value="GlyRS_alpha_core"/>
    <property type="match status" value="1"/>
</dbReference>
<dbReference type="FunFam" id="3.30.930.10:FF:000006">
    <property type="entry name" value="Glycine--tRNA ligase alpha subunit"/>
    <property type="match status" value="1"/>
</dbReference>
<dbReference type="Gene3D" id="3.30.930.10">
    <property type="entry name" value="Bira Bifunctional Protein, Domain 2"/>
    <property type="match status" value="1"/>
</dbReference>
<dbReference type="Gene3D" id="1.20.58.180">
    <property type="entry name" value="Class II aaRS and biotin synthetases, domain 2"/>
    <property type="match status" value="1"/>
</dbReference>
<dbReference type="HAMAP" id="MF_00254">
    <property type="entry name" value="Gly_tRNA_synth_alpha"/>
    <property type="match status" value="1"/>
</dbReference>
<dbReference type="InterPro" id="IPR045864">
    <property type="entry name" value="aa-tRNA-synth_II/BPL/LPL"/>
</dbReference>
<dbReference type="InterPro" id="IPR006194">
    <property type="entry name" value="Gly-tRNA-synth_heterodimer"/>
</dbReference>
<dbReference type="InterPro" id="IPR002310">
    <property type="entry name" value="Gly-tRNA_ligase_asu"/>
</dbReference>
<dbReference type="NCBIfam" id="TIGR00388">
    <property type="entry name" value="glyQ"/>
    <property type="match status" value="1"/>
</dbReference>
<dbReference type="NCBIfam" id="NF006827">
    <property type="entry name" value="PRK09348.1"/>
    <property type="match status" value="1"/>
</dbReference>
<dbReference type="PANTHER" id="PTHR30075:SF2">
    <property type="entry name" value="GLYCINE--TRNA LIGASE, CHLOROPLASTIC_MITOCHONDRIAL 2"/>
    <property type="match status" value="1"/>
</dbReference>
<dbReference type="PANTHER" id="PTHR30075">
    <property type="entry name" value="GLYCYL-TRNA SYNTHETASE"/>
    <property type="match status" value="1"/>
</dbReference>
<dbReference type="Pfam" id="PF02091">
    <property type="entry name" value="tRNA-synt_2e"/>
    <property type="match status" value="1"/>
</dbReference>
<dbReference type="PRINTS" id="PR01044">
    <property type="entry name" value="TRNASYNTHGA"/>
</dbReference>
<dbReference type="SUPFAM" id="SSF55681">
    <property type="entry name" value="Class II aaRS and biotin synthetases"/>
    <property type="match status" value="1"/>
</dbReference>
<dbReference type="PROSITE" id="PS50861">
    <property type="entry name" value="AA_TRNA_LIGASE_II_GLYAB"/>
    <property type="match status" value="1"/>
</dbReference>
<proteinExistence type="inferred from homology"/>
<accession>B6JMI0</accession>
<organism>
    <name type="scientific">Helicobacter pylori (strain P12)</name>
    <dbReference type="NCBI Taxonomy" id="570508"/>
    <lineage>
        <taxon>Bacteria</taxon>
        <taxon>Pseudomonadati</taxon>
        <taxon>Campylobacterota</taxon>
        <taxon>Epsilonproteobacteria</taxon>
        <taxon>Campylobacterales</taxon>
        <taxon>Helicobacteraceae</taxon>
        <taxon>Helicobacter</taxon>
    </lineage>
</organism>
<feature type="chain" id="PRO_1000101200" description="Glycine--tRNA ligase alpha subunit">
    <location>
        <begin position="1"/>
        <end position="298"/>
    </location>
</feature>
<reference key="1">
    <citation type="submission" date="2008-10" db="EMBL/GenBank/DDBJ databases">
        <title>The complete genome sequence of Helicobacter pylori strain P12.</title>
        <authorList>
            <person name="Fischer W."/>
            <person name="Windhager L."/>
            <person name="Karnholz A."/>
            <person name="Zeiller M."/>
            <person name="Zimmer R."/>
            <person name="Haas R."/>
        </authorList>
    </citation>
    <scope>NUCLEOTIDE SEQUENCE [LARGE SCALE GENOMIC DNA]</scope>
    <source>
        <strain>P12</strain>
    </source>
</reference>
<evidence type="ECO:0000255" key="1">
    <source>
        <dbReference type="HAMAP-Rule" id="MF_00254"/>
    </source>
</evidence>